<dbReference type="EC" id="2.7.7.23" evidence="1"/>
<dbReference type="EC" id="2.3.1.157" evidence="1"/>
<dbReference type="EMBL" id="AM406670">
    <property type="protein sequence ID" value="CAL96253.1"/>
    <property type="molecule type" value="Genomic_DNA"/>
</dbReference>
<dbReference type="RefSeq" id="WP_011767359.1">
    <property type="nucleotide sequence ID" value="NC_008702.1"/>
</dbReference>
<dbReference type="SMR" id="A1KBP7"/>
<dbReference type="STRING" id="62928.azo3637"/>
<dbReference type="KEGG" id="azo:azo3637"/>
<dbReference type="eggNOG" id="COG1207">
    <property type="taxonomic scope" value="Bacteria"/>
</dbReference>
<dbReference type="HOGENOM" id="CLU_029499_15_2_4"/>
<dbReference type="UniPathway" id="UPA00113">
    <property type="reaction ID" value="UER00532"/>
</dbReference>
<dbReference type="UniPathway" id="UPA00113">
    <property type="reaction ID" value="UER00533"/>
</dbReference>
<dbReference type="UniPathway" id="UPA00973"/>
<dbReference type="Proteomes" id="UP000002588">
    <property type="component" value="Chromosome"/>
</dbReference>
<dbReference type="GO" id="GO:0005737">
    <property type="term" value="C:cytoplasm"/>
    <property type="evidence" value="ECO:0007669"/>
    <property type="project" value="UniProtKB-SubCell"/>
</dbReference>
<dbReference type="GO" id="GO:0016020">
    <property type="term" value="C:membrane"/>
    <property type="evidence" value="ECO:0007669"/>
    <property type="project" value="GOC"/>
</dbReference>
<dbReference type="GO" id="GO:0019134">
    <property type="term" value="F:glucosamine-1-phosphate N-acetyltransferase activity"/>
    <property type="evidence" value="ECO:0007669"/>
    <property type="project" value="UniProtKB-UniRule"/>
</dbReference>
<dbReference type="GO" id="GO:0000287">
    <property type="term" value="F:magnesium ion binding"/>
    <property type="evidence" value="ECO:0007669"/>
    <property type="project" value="UniProtKB-UniRule"/>
</dbReference>
<dbReference type="GO" id="GO:0003977">
    <property type="term" value="F:UDP-N-acetylglucosamine diphosphorylase activity"/>
    <property type="evidence" value="ECO:0007669"/>
    <property type="project" value="UniProtKB-UniRule"/>
</dbReference>
<dbReference type="GO" id="GO:0000902">
    <property type="term" value="P:cell morphogenesis"/>
    <property type="evidence" value="ECO:0007669"/>
    <property type="project" value="UniProtKB-UniRule"/>
</dbReference>
<dbReference type="GO" id="GO:0071555">
    <property type="term" value="P:cell wall organization"/>
    <property type="evidence" value="ECO:0007669"/>
    <property type="project" value="UniProtKB-KW"/>
</dbReference>
<dbReference type="GO" id="GO:0009245">
    <property type="term" value="P:lipid A biosynthetic process"/>
    <property type="evidence" value="ECO:0007669"/>
    <property type="project" value="UniProtKB-UniRule"/>
</dbReference>
<dbReference type="GO" id="GO:0009252">
    <property type="term" value="P:peptidoglycan biosynthetic process"/>
    <property type="evidence" value="ECO:0007669"/>
    <property type="project" value="UniProtKB-UniRule"/>
</dbReference>
<dbReference type="GO" id="GO:0008360">
    <property type="term" value="P:regulation of cell shape"/>
    <property type="evidence" value="ECO:0007669"/>
    <property type="project" value="UniProtKB-KW"/>
</dbReference>
<dbReference type="GO" id="GO:0006048">
    <property type="term" value="P:UDP-N-acetylglucosamine biosynthetic process"/>
    <property type="evidence" value="ECO:0007669"/>
    <property type="project" value="UniProtKB-UniPathway"/>
</dbReference>
<dbReference type="CDD" id="cd02540">
    <property type="entry name" value="GT2_GlmU_N_bac"/>
    <property type="match status" value="1"/>
</dbReference>
<dbReference type="CDD" id="cd03353">
    <property type="entry name" value="LbH_GlmU_C"/>
    <property type="match status" value="1"/>
</dbReference>
<dbReference type="Gene3D" id="2.160.10.10">
    <property type="entry name" value="Hexapeptide repeat proteins"/>
    <property type="match status" value="1"/>
</dbReference>
<dbReference type="Gene3D" id="3.90.550.10">
    <property type="entry name" value="Spore Coat Polysaccharide Biosynthesis Protein SpsA, Chain A"/>
    <property type="match status" value="1"/>
</dbReference>
<dbReference type="HAMAP" id="MF_01631">
    <property type="entry name" value="GlmU"/>
    <property type="match status" value="1"/>
</dbReference>
<dbReference type="InterPro" id="IPR005882">
    <property type="entry name" value="Bifunctional_GlmU"/>
</dbReference>
<dbReference type="InterPro" id="IPR050065">
    <property type="entry name" value="GlmU-like"/>
</dbReference>
<dbReference type="InterPro" id="IPR038009">
    <property type="entry name" value="GlmU_C_LbH"/>
</dbReference>
<dbReference type="InterPro" id="IPR001451">
    <property type="entry name" value="Hexapep"/>
</dbReference>
<dbReference type="InterPro" id="IPR025877">
    <property type="entry name" value="MobA-like_NTP_Trfase"/>
</dbReference>
<dbReference type="InterPro" id="IPR029044">
    <property type="entry name" value="Nucleotide-diphossugar_trans"/>
</dbReference>
<dbReference type="InterPro" id="IPR011004">
    <property type="entry name" value="Trimer_LpxA-like_sf"/>
</dbReference>
<dbReference type="NCBIfam" id="TIGR01173">
    <property type="entry name" value="glmU"/>
    <property type="match status" value="1"/>
</dbReference>
<dbReference type="PANTHER" id="PTHR43584:SF3">
    <property type="entry name" value="BIFUNCTIONAL PROTEIN GLMU"/>
    <property type="match status" value="1"/>
</dbReference>
<dbReference type="PANTHER" id="PTHR43584">
    <property type="entry name" value="NUCLEOTIDYL TRANSFERASE"/>
    <property type="match status" value="1"/>
</dbReference>
<dbReference type="Pfam" id="PF00132">
    <property type="entry name" value="Hexapep"/>
    <property type="match status" value="2"/>
</dbReference>
<dbReference type="Pfam" id="PF12804">
    <property type="entry name" value="NTP_transf_3"/>
    <property type="match status" value="1"/>
</dbReference>
<dbReference type="SUPFAM" id="SSF53448">
    <property type="entry name" value="Nucleotide-diphospho-sugar transferases"/>
    <property type="match status" value="1"/>
</dbReference>
<dbReference type="SUPFAM" id="SSF51161">
    <property type="entry name" value="Trimeric LpxA-like enzymes"/>
    <property type="match status" value="1"/>
</dbReference>
<proteinExistence type="inferred from homology"/>
<evidence type="ECO:0000255" key="1">
    <source>
        <dbReference type="HAMAP-Rule" id="MF_01631"/>
    </source>
</evidence>
<comment type="function">
    <text evidence="1">Catalyzes the last two sequential reactions in the de novo biosynthetic pathway for UDP-N-acetylglucosamine (UDP-GlcNAc). The C-terminal domain catalyzes the transfer of acetyl group from acetyl coenzyme A to glucosamine-1-phosphate (GlcN-1-P) to produce N-acetylglucosamine-1-phosphate (GlcNAc-1-P), which is converted into UDP-GlcNAc by the transfer of uridine 5-monophosphate (from uridine 5-triphosphate), a reaction catalyzed by the N-terminal domain.</text>
</comment>
<comment type="catalytic activity">
    <reaction evidence="1">
        <text>alpha-D-glucosamine 1-phosphate + acetyl-CoA = N-acetyl-alpha-D-glucosamine 1-phosphate + CoA + H(+)</text>
        <dbReference type="Rhea" id="RHEA:13725"/>
        <dbReference type="ChEBI" id="CHEBI:15378"/>
        <dbReference type="ChEBI" id="CHEBI:57287"/>
        <dbReference type="ChEBI" id="CHEBI:57288"/>
        <dbReference type="ChEBI" id="CHEBI:57776"/>
        <dbReference type="ChEBI" id="CHEBI:58516"/>
        <dbReference type="EC" id="2.3.1.157"/>
    </reaction>
</comment>
<comment type="catalytic activity">
    <reaction evidence="1">
        <text>N-acetyl-alpha-D-glucosamine 1-phosphate + UTP + H(+) = UDP-N-acetyl-alpha-D-glucosamine + diphosphate</text>
        <dbReference type="Rhea" id="RHEA:13509"/>
        <dbReference type="ChEBI" id="CHEBI:15378"/>
        <dbReference type="ChEBI" id="CHEBI:33019"/>
        <dbReference type="ChEBI" id="CHEBI:46398"/>
        <dbReference type="ChEBI" id="CHEBI:57705"/>
        <dbReference type="ChEBI" id="CHEBI:57776"/>
        <dbReference type="EC" id="2.7.7.23"/>
    </reaction>
</comment>
<comment type="cofactor">
    <cofactor evidence="1">
        <name>Mg(2+)</name>
        <dbReference type="ChEBI" id="CHEBI:18420"/>
    </cofactor>
    <text evidence="1">Binds 1 Mg(2+) ion per subunit.</text>
</comment>
<comment type="pathway">
    <text evidence="1">Nucleotide-sugar biosynthesis; UDP-N-acetyl-alpha-D-glucosamine biosynthesis; N-acetyl-alpha-D-glucosamine 1-phosphate from alpha-D-glucosamine 6-phosphate (route II): step 2/2.</text>
</comment>
<comment type="pathway">
    <text evidence="1">Nucleotide-sugar biosynthesis; UDP-N-acetyl-alpha-D-glucosamine biosynthesis; UDP-N-acetyl-alpha-D-glucosamine from N-acetyl-alpha-D-glucosamine 1-phosphate: step 1/1.</text>
</comment>
<comment type="pathway">
    <text evidence="1">Bacterial outer membrane biogenesis; LPS lipid A biosynthesis.</text>
</comment>
<comment type="subunit">
    <text evidence="1">Homotrimer.</text>
</comment>
<comment type="subcellular location">
    <subcellularLocation>
        <location evidence="1">Cytoplasm</location>
    </subcellularLocation>
</comment>
<comment type="similarity">
    <text evidence="1">In the N-terminal section; belongs to the N-acetylglucosamine-1-phosphate uridyltransferase family.</text>
</comment>
<comment type="similarity">
    <text evidence="1">In the C-terminal section; belongs to the transferase hexapeptide repeat family.</text>
</comment>
<gene>
    <name evidence="1" type="primary">glmU</name>
    <name type="ordered locus">azo3637</name>
</gene>
<keyword id="KW-0012">Acyltransferase</keyword>
<keyword id="KW-0133">Cell shape</keyword>
<keyword id="KW-0961">Cell wall biogenesis/degradation</keyword>
<keyword id="KW-0963">Cytoplasm</keyword>
<keyword id="KW-0460">Magnesium</keyword>
<keyword id="KW-0479">Metal-binding</keyword>
<keyword id="KW-0511">Multifunctional enzyme</keyword>
<keyword id="KW-0548">Nucleotidyltransferase</keyword>
<keyword id="KW-0573">Peptidoglycan synthesis</keyword>
<keyword id="KW-1185">Reference proteome</keyword>
<keyword id="KW-0677">Repeat</keyword>
<keyword id="KW-0808">Transferase</keyword>
<reference key="1">
    <citation type="journal article" date="2006" name="Nat. Biotechnol.">
        <title>Complete genome of the mutualistic, N2-fixing grass endophyte Azoarcus sp. strain BH72.</title>
        <authorList>
            <person name="Krause A."/>
            <person name="Ramakumar A."/>
            <person name="Bartels D."/>
            <person name="Battistoni F."/>
            <person name="Bekel T."/>
            <person name="Boch J."/>
            <person name="Boehm M."/>
            <person name="Friedrich F."/>
            <person name="Hurek T."/>
            <person name="Krause L."/>
            <person name="Linke B."/>
            <person name="McHardy A.C."/>
            <person name="Sarkar A."/>
            <person name="Schneiker S."/>
            <person name="Syed A.A."/>
            <person name="Thauer R."/>
            <person name="Vorhoelter F.-J."/>
            <person name="Weidner S."/>
            <person name="Puehler A."/>
            <person name="Reinhold-Hurek B."/>
            <person name="Kaiser O."/>
            <person name="Goesmann A."/>
        </authorList>
    </citation>
    <scope>NUCLEOTIDE SEQUENCE [LARGE SCALE GENOMIC DNA]</scope>
    <source>
        <strain>BH72</strain>
    </source>
</reference>
<protein>
    <recommendedName>
        <fullName evidence="1">Bifunctional protein GlmU</fullName>
    </recommendedName>
    <domain>
        <recommendedName>
            <fullName evidence="1">UDP-N-acetylglucosamine pyrophosphorylase</fullName>
            <ecNumber evidence="1">2.7.7.23</ecNumber>
        </recommendedName>
        <alternativeName>
            <fullName evidence="1">N-acetylglucosamine-1-phosphate uridyltransferase</fullName>
        </alternativeName>
    </domain>
    <domain>
        <recommendedName>
            <fullName evidence="1">Glucosamine-1-phosphate N-acetyltransferase</fullName>
            <ecNumber evidence="1">2.3.1.157</ecNumber>
        </recommendedName>
    </domain>
</protein>
<sequence>MEVVILAAGQGKRMRSVLPKVLQPLAGKPMLSHVLDAARTLAARRICVVYGHGGEVVRERLDAADLAWARQEPQLGTGHAVQQALPHLTDGDLALVLYGDVPLIGVPTLQRLAAAAGDTRLALLTVELDNPTGYGRILRDAAGRVVRIVEEKDASDAERRVREVNTGILVAPVARLRAWLGSLRNDNAQGEYYLTDIIGMAVAEDIEVVTVQPDAVSETLGVNSKPQLAELERIHQRNIAQRLMEDGVTLIDPARIDVRGELVCGRDVEIDVNCVFEGRVELGDGVRIGANCVVRDARIGSGTRVAPFSHIEQTVMGPACVIGPYARTRPGTELGEDVHLGNFVEVKNSVIAAHSKANHLAYVGDADVGQRVNIGAGTITCNYDGANKFRTVIEDDVFIGSDTQLVAPVRVGRGATLGAGTTLTKDAPPEQLTVSRAKQLSIAGWKRPVKQR</sequence>
<name>GLMU_AZOSB</name>
<accession>A1KBP7</accession>
<feature type="chain" id="PRO_1000056137" description="Bifunctional protein GlmU">
    <location>
        <begin position="1"/>
        <end position="452"/>
    </location>
</feature>
<feature type="region of interest" description="Pyrophosphorylase" evidence="1">
    <location>
        <begin position="1"/>
        <end position="225"/>
    </location>
</feature>
<feature type="region of interest" description="Linker" evidence="1">
    <location>
        <begin position="226"/>
        <end position="246"/>
    </location>
</feature>
<feature type="region of interest" description="N-acetyltransferase" evidence="1">
    <location>
        <begin position="247"/>
        <end position="452"/>
    </location>
</feature>
<feature type="active site" description="Proton acceptor" evidence="1">
    <location>
        <position position="359"/>
    </location>
</feature>
<feature type="binding site" evidence="1">
    <location>
        <begin position="6"/>
        <end position="9"/>
    </location>
    <ligand>
        <name>UDP-N-acetyl-alpha-D-glucosamine</name>
        <dbReference type="ChEBI" id="CHEBI:57705"/>
    </ligand>
</feature>
<feature type="binding site" evidence="1">
    <location>
        <position position="20"/>
    </location>
    <ligand>
        <name>UDP-N-acetyl-alpha-D-glucosamine</name>
        <dbReference type="ChEBI" id="CHEBI:57705"/>
    </ligand>
</feature>
<feature type="binding site" evidence="1">
    <location>
        <position position="71"/>
    </location>
    <ligand>
        <name>UDP-N-acetyl-alpha-D-glucosamine</name>
        <dbReference type="ChEBI" id="CHEBI:57705"/>
    </ligand>
</feature>
<feature type="binding site" evidence="1">
    <location>
        <begin position="76"/>
        <end position="77"/>
    </location>
    <ligand>
        <name>UDP-N-acetyl-alpha-D-glucosamine</name>
        <dbReference type="ChEBI" id="CHEBI:57705"/>
    </ligand>
</feature>
<feature type="binding site" evidence="1">
    <location>
        <begin position="98"/>
        <end position="100"/>
    </location>
    <ligand>
        <name>UDP-N-acetyl-alpha-D-glucosamine</name>
        <dbReference type="ChEBI" id="CHEBI:57705"/>
    </ligand>
</feature>
<feature type="binding site" evidence="1">
    <location>
        <position position="100"/>
    </location>
    <ligand>
        <name>Mg(2+)</name>
        <dbReference type="ChEBI" id="CHEBI:18420"/>
    </ligand>
</feature>
<feature type="binding site" evidence="1">
    <location>
        <position position="135"/>
    </location>
    <ligand>
        <name>UDP-N-acetyl-alpha-D-glucosamine</name>
        <dbReference type="ChEBI" id="CHEBI:57705"/>
    </ligand>
</feature>
<feature type="binding site" evidence="1">
    <location>
        <position position="150"/>
    </location>
    <ligand>
        <name>UDP-N-acetyl-alpha-D-glucosamine</name>
        <dbReference type="ChEBI" id="CHEBI:57705"/>
    </ligand>
</feature>
<feature type="binding site" evidence="1">
    <location>
        <position position="165"/>
    </location>
    <ligand>
        <name>UDP-N-acetyl-alpha-D-glucosamine</name>
        <dbReference type="ChEBI" id="CHEBI:57705"/>
    </ligand>
</feature>
<feature type="binding site" evidence="1">
    <location>
        <position position="223"/>
    </location>
    <ligand>
        <name>Mg(2+)</name>
        <dbReference type="ChEBI" id="CHEBI:18420"/>
    </ligand>
</feature>
<feature type="binding site" evidence="1">
    <location>
        <position position="223"/>
    </location>
    <ligand>
        <name>UDP-N-acetyl-alpha-D-glucosamine</name>
        <dbReference type="ChEBI" id="CHEBI:57705"/>
    </ligand>
</feature>
<feature type="binding site" evidence="1">
    <location>
        <position position="329"/>
    </location>
    <ligand>
        <name>UDP-N-acetyl-alpha-D-glucosamine</name>
        <dbReference type="ChEBI" id="CHEBI:57705"/>
    </ligand>
</feature>
<feature type="binding site" evidence="1">
    <location>
        <position position="347"/>
    </location>
    <ligand>
        <name>UDP-N-acetyl-alpha-D-glucosamine</name>
        <dbReference type="ChEBI" id="CHEBI:57705"/>
    </ligand>
</feature>
<feature type="binding site" evidence="1">
    <location>
        <position position="362"/>
    </location>
    <ligand>
        <name>UDP-N-acetyl-alpha-D-glucosamine</name>
        <dbReference type="ChEBI" id="CHEBI:57705"/>
    </ligand>
</feature>
<feature type="binding site" evidence="1">
    <location>
        <position position="373"/>
    </location>
    <ligand>
        <name>UDP-N-acetyl-alpha-D-glucosamine</name>
        <dbReference type="ChEBI" id="CHEBI:57705"/>
    </ligand>
</feature>
<feature type="binding site" evidence="1">
    <location>
        <position position="376"/>
    </location>
    <ligand>
        <name>acetyl-CoA</name>
        <dbReference type="ChEBI" id="CHEBI:57288"/>
    </ligand>
</feature>
<feature type="binding site" evidence="1">
    <location>
        <begin position="382"/>
        <end position="383"/>
    </location>
    <ligand>
        <name>acetyl-CoA</name>
        <dbReference type="ChEBI" id="CHEBI:57288"/>
    </ligand>
</feature>
<feature type="binding site" evidence="1">
    <location>
        <position position="401"/>
    </location>
    <ligand>
        <name>acetyl-CoA</name>
        <dbReference type="ChEBI" id="CHEBI:57288"/>
    </ligand>
</feature>
<feature type="binding site" evidence="1">
    <location>
        <position position="419"/>
    </location>
    <ligand>
        <name>acetyl-CoA</name>
        <dbReference type="ChEBI" id="CHEBI:57288"/>
    </ligand>
</feature>
<feature type="binding site" evidence="1">
    <location>
        <position position="436"/>
    </location>
    <ligand>
        <name>acetyl-CoA</name>
        <dbReference type="ChEBI" id="CHEBI:57288"/>
    </ligand>
</feature>
<organism>
    <name type="scientific">Azoarcus sp. (strain BH72)</name>
    <dbReference type="NCBI Taxonomy" id="418699"/>
    <lineage>
        <taxon>Bacteria</taxon>
        <taxon>Pseudomonadati</taxon>
        <taxon>Pseudomonadota</taxon>
        <taxon>Betaproteobacteria</taxon>
        <taxon>Rhodocyclales</taxon>
        <taxon>Zoogloeaceae</taxon>
        <taxon>Azoarcus</taxon>
    </lineage>
</organism>